<sequence length="380" mass="42660">MEEGGDFDNYYGADNQSECEYTDWKSSGALIPAIYMLVFLLGTTGNGLVLWTVFRSSREKRRSADIFIASLAVADLTFVVTLPLWATYTYRDYDWPFGTFFCKLSSYLIFVNMYASVFCLTGLSFDRYLAIVRPVANARLRLRVSGAVATAVLWVLAALLAMPVMVLRTTGDLENTTKVQCYMDYSMVATVSSEWAWEVGLGVSSTTVGFVVPFTIMLTCYFFIAQTIAGHFRKERIEGLRKRRRLLSIIVVLVVTFALCWMPYHLVKTLYMLGSLLHWPCDFDLFLMNIFPYCTCISYVNSCLNPFLYAFFDPRFRQACTSMLCCGQSRCAGTSHSSSGEKSASYSSGHSQGPGPNMGKGGEQMHEKSIPYSQETLVVD</sequence>
<organism>
    <name type="scientific">Homo sapiens</name>
    <name type="common">Human</name>
    <dbReference type="NCBI Taxonomy" id="9606"/>
    <lineage>
        <taxon>Eukaryota</taxon>
        <taxon>Metazoa</taxon>
        <taxon>Chordata</taxon>
        <taxon>Craniata</taxon>
        <taxon>Vertebrata</taxon>
        <taxon>Euteleostomi</taxon>
        <taxon>Mammalia</taxon>
        <taxon>Eutheria</taxon>
        <taxon>Euarchontoglires</taxon>
        <taxon>Primates</taxon>
        <taxon>Haplorrhini</taxon>
        <taxon>Catarrhini</taxon>
        <taxon>Hominidae</taxon>
        <taxon>Homo</taxon>
    </lineage>
</organism>
<proteinExistence type="evidence at protein level"/>
<evidence type="ECO:0000250" key="1">
    <source>
        <dbReference type="UniProtKB" id="Q7SZP9"/>
    </source>
</evidence>
<evidence type="ECO:0000250" key="2">
    <source>
        <dbReference type="UniProtKB" id="Q9JHG3"/>
    </source>
</evidence>
<evidence type="ECO:0000250" key="3">
    <source>
        <dbReference type="UniProtKB" id="Q9WV08"/>
    </source>
</evidence>
<evidence type="ECO:0000255" key="4"/>
<evidence type="ECO:0000255" key="5">
    <source>
        <dbReference type="PROSITE-ProRule" id="PRU00521"/>
    </source>
</evidence>
<evidence type="ECO:0000256" key="6">
    <source>
        <dbReference type="SAM" id="MobiDB-lite"/>
    </source>
</evidence>
<evidence type="ECO:0000269" key="7">
    <source>
    </source>
</evidence>
<evidence type="ECO:0000269" key="8">
    <source>
    </source>
</evidence>
<evidence type="ECO:0000269" key="9">
    <source>
    </source>
</evidence>
<evidence type="ECO:0000269" key="10">
    <source>
    </source>
</evidence>
<evidence type="ECO:0000269" key="11">
    <source>
    </source>
</evidence>
<evidence type="ECO:0000269" key="12">
    <source>
    </source>
</evidence>
<evidence type="ECO:0000269" key="13">
    <source>
    </source>
</evidence>
<evidence type="ECO:0000305" key="14"/>
<evidence type="ECO:0000312" key="15">
    <source>
        <dbReference type="HGNC" id="HGNC:339"/>
    </source>
</evidence>
<evidence type="ECO:0007744" key="16">
    <source>
        <dbReference type="PDB" id="7SUS"/>
    </source>
</evidence>
<evidence type="ECO:0007744" key="17">
    <source>
        <dbReference type="PDB" id="7W0M"/>
    </source>
</evidence>
<evidence type="ECO:0007744" key="18">
    <source>
        <dbReference type="PDB" id="7W0N"/>
    </source>
</evidence>
<evidence type="ECO:0007744" key="19">
    <source>
        <dbReference type="PDB" id="7W0O"/>
    </source>
</evidence>
<evidence type="ECO:0007744" key="20">
    <source>
        <dbReference type="PDB" id="7W0P"/>
    </source>
</evidence>
<evidence type="ECO:0007744" key="21">
    <source>
        <dbReference type="PDB" id="8XZF"/>
    </source>
</evidence>
<evidence type="ECO:0007744" key="22">
    <source>
        <dbReference type="PDB" id="8XZG"/>
    </source>
</evidence>
<evidence type="ECO:0007744" key="23">
    <source>
        <dbReference type="PDB" id="8XZH"/>
    </source>
</evidence>
<evidence type="ECO:0007744" key="24">
    <source>
        <dbReference type="PDB" id="8XZI"/>
    </source>
</evidence>
<evidence type="ECO:0007744" key="25">
    <source>
        <dbReference type="PDB" id="8XZJ"/>
    </source>
</evidence>
<evidence type="ECO:0007829" key="26">
    <source>
        <dbReference type="PDB" id="2LOT"/>
    </source>
</evidence>
<evidence type="ECO:0007829" key="27">
    <source>
        <dbReference type="PDB" id="2LOU"/>
    </source>
</evidence>
<evidence type="ECO:0007829" key="28">
    <source>
        <dbReference type="PDB" id="2LOV"/>
    </source>
</evidence>
<evidence type="ECO:0007829" key="29">
    <source>
        <dbReference type="PDB" id="5VBL"/>
    </source>
</evidence>
<evidence type="ECO:0007829" key="30">
    <source>
        <dbReference type="PDB" id="7W0P"/>
    </source>
</evidence>
<evidence type="ECO:0007829" key="31">
    <source>
        <dbReference type="PDB" id="8XZH"/>
    </source>
</evidence>
<accession>P35414</accession>
<dbReference type="EMBL" id="U03642">
    <property type="protein sequence ID" value="AAA18954.1"/>
    <property type="molecule type" value="Genomic_DNA"/>
</dbReference>
<dbReference type="EMBL" id="X89271">
    <property type="protein sequence ID" value="CAA61546.1"/>
    <property type="molecule type" value="mRNA"/>
</dbReference>
<dbReference type="EMBL" id="BC032688">
    <property type="protein sequence ID" value="AAH32688.1"/>
    <property type="molecule type" value="mRNA"/>
</dbReference>
<dbReference type="CCDS" id="CCDS7950.1"/>
<dbReference type="PIR" id="I38435">
    <property type="entry name" value="I38435"/>
</dbReference>
<dbReference type="RefSeq" id="NP_005152.1">
    <property type="nucleotide sequence ID" value="NM_005161.6"/>
</dbReference>
<dbReference type="PDB" id="2LOT">
    <property type="method" value="NMR"/>
    <property type="chains" value="A=1-55"/>
</dbReference>
<dbReference type="PDB" id="2LOU">
    <property type="method" value="NMR"/>
    <property type="chains" value="A=1-55"/>
</dbReference>
<dbReference type="PDB" id="2LOV">
    <property type="method" value="NMR"/>
    <property type="chains" value="A=1-55"/>
</dbReference>
<dbReference type="PDB" id="2LOW">
    <property type="method" value="NMR"/>
    <property type="chains" value="A=1-55"/>
</dbReference>
<dbReference type="PDB" id="5VBL">
    <property type="method" value="X-ray"/>
    <property type="resolution" value="2.60 A"/>
    <property type="chains" value="B=7-229, B=243-330"/>
</dbReference>
<dbReference type="PDB" id="6KNM">
    <property type="method" value="X-ray"/>
    <property type="resolution" value="3.20 A"/>
    <property type="chains" value="B=7-229, B=243-330"/>
</dbReference>
<dbReference type="PDB" id="7SUS">
    <property type="method" value="X-ray"/>
    <property type="resolution" value="2.70 A"/>
    <property type="chains" value="A=7-229, A=243-330"/>
</dbReference>
<dbReference type="PDB" id="7W0L">
    <property type="method" value="EM"/>
    <property type="resolution" value="3.57 A"/>
    <property type="chains" value="Q/R=2-330"/>
</dbReference>
<dbReference type="PDB" id="7W0M">
    <property type="method" value="EM"/>
    <property type="resolution" value="3.71 A"/>
    <property type="chains" value="R=2-330"/>
</dbReference>
<dbReference type="PDB" id="7W0N">
    <property type="method" value="EM"/>
    <property type="resolution" value="4.21 A"/>
    <property type="chains" value="Q/R=2-330"/>
</dbReference>
<dbReference type="PDB" id="7W0O">
    <property type="method" value="EM"/>
    <property type="resolution" value="3.78 A"/>
    <property type="chains" value="R=2-330"/>
</dbReference>
<dbReference type="PDB" id="7W0P">
    <property type="method" value="EM"/>
    <property type="resolution" value="3.16 A"/>
    <property type="chains" value="R=2-330"/>
</dbReference>
<dbReference type="PDB" id="8XQE">
    <property type="method" value="EM"/>
    <property type="resolution" value="3.48 A"/>
    <property type="chains" value="Q/R=1-330"/>
</dbReference>
<dbReference type="PDB" id="8XQF">
    <property type="method" value="EM"/>
    <property type="resolution" value="3.13 A"/>
    <property type="chains" value="R=1-330"/>
</dbReference>
<dbReference type="PDB" id="8XQI">
    <property type="method" value="EM"/>
    <property type="resolution" value="3.25 A"/>
    <property type="chains" value="A/B=1-330"/>
</dbReference>
<dbReference type="PDB" id="8XQJ">
    <property type="method" value="EM"/>
    <property type="resolution" value="2.95 A"/>
    <property type="chains" value="C/D=1-330"/>
</dbReference>
<dbReference type="PDB" id="8XZF">
    <property type="method" value="EM"/>
    <property type="resolution" value="3.00 A"/>
    <property type="chains" value="R=1-380"/>
</dbReference>
<dbReference type="PDB" id="8XZG">
    <property type="method" value="EM"/>
    <property type="resolution" value="3.20 A"/>
    <property type="chains" value="R=1-380"/>
</dbReference>
<dbReference type="PDB" id="8XZH">
    <property type="method" value="EM"/>
    <property type="resolution" value="2.60 A"/>
    <property type="chains" value="R=1-380"/>
</dbReference>
<dbReference type="PDB" id="8XZI">
    <property type="method" value="EM"/>
    <property type="resolution" value="2.70 A"/>
    <property type="chains" value="R=1-380"/>
</dbReference>
<dbReference type="PDB" id="8XZJ">
    <property type="method" value="EM"/>
    <property type="resolution" value="3.00 A"/>
    <property type="chains" value="R=1-380"/>
</dbReference>
<dbReference type="PDB" id="8Z74">
    <property type="method" value="EM"/>
    <property type="resolution" value="3.01 A"/>
    <property type="chains" value="C/D=2-330"/>
</dbReference>
<dbReference type="PDB" id="8Z7J">
    <property type="method" value="EM"/>
    <property type="resolution" value="3.12 A"/>
    <property type="chains" value="R=2-330"/>
</dbReference>
<dbReference type="PDBsum" id="2LOT"/>
<dbReference type="PDBsum" id="2LOU"/>
<dbReference type="PDBsum" id="2LOV"/>
<dbReference type="PDBsum" id="2LOW"/>
<dbReference type="PDBsum" id="5VBL"/>
<dbReference type="PDBsum" id="6KNM"/>
<dbReference type="PDBsum" id="7SUS"/>
<dbReference type="PDBsum" id="7W0L"/>
<dbReference type="PDBsum" id="7W0M"/>
<dbReference type="PDBsum" id="7W0N"/>
<dbReference type="PDBsum" id="7W0O"/>
<dbReference type="PDBsum" id="7W0P"/>
<dbReference type="PDBsum" id="8XQE"/>
<dbReference type="PDBsum" id="8XQF"/>
<dbReference type="PDBsum" id="8XQI"/>
<dbReference type="PDBsum" id="8XQJ"/>
<dbReference type="PDBsum" id="8XZF"/>
<dbReference type="PDBsum" id="8XZG"/>
<dbReference type="PDBsum" id="8XZH"/>
<dbReference type="PDBsum" id="8XZI"/>
<dbReference type="PDBsum" id="8XZJ"/>
<dbReference type="PDBsum" id="8Z74"/>
<dbReference type="PDBsum" id="8Z7J"/>
<dbReference type="BMRB" id="P35414"/>
<dbReference type="EMDB" id="EMD-32243"/>
<dbReference type="EMDB" id="EMD-32244"/>
<dbReference type="EMDB" id="EMD-32245"/>
<dbReference type="EMDB" id="EMD-32246"/>
<dbReference type="EMDB" id="EMD-32247"/>
<dbReference type="EMDB" id="EMD-38574"/>
<dbReference type="EMDB" id="EMD-38575"/>
<dbReference type="EMDB" id="EMD-38578"/>
<dbReference type="EMDB" id="EMD-38579"/>
<dbReference type="EMDB" id="EMD-38794"/>
<dbReference type="EMDB" id="EMD-38795"/>
<dbReference type="EMDB" id="EMD-38796"/>
<dbReference type="EMDB" id="EMD-38797"/>
<dbReference type="EMDB" id="EMD-38798"/>
<dbReference type="EMDB" id="EMD-39810"/>
<dbReference type="EMDB" id="EMD-39816"/>
<dbReference type="SMR" id="P35414"/>
<dbReference type="BioGRID" id="106693">
    <property type="interactions" value="234"/>
</dbReference>
<dbReference type="CORUM" id="P35414"/>
<dbReference type="FunCoup" id="P35414">
    <property type="interactions" value="1104"/>
</dbReference>
<dbReference type="IntAct" id="P35414">
    <property type="interactions" value="215"/>
</dbReference>
<dbReference type="MINT" id="P35414"/>
<dbReference type="STRING" id="9606.ENSP00000475344"/>
<dbReference type="BindingDB" id="P35414"/>
<dbReference type="ChEMBL" id="CHEMBL1628481"/>
<dbReference type="DrugBank" id="DB19329">
    <property type="generic name" value="Azelaprag"/>
</dbReference>
<dbReference type="GuidetoPHARMACOLOGY" id="36"/>
<dbReference type="TCDB" id="9.A.14.13.10">
    <property type="family name" value="the g-protein-coupled receptor (gpcr) family"/>
</dbReference>
<dbReference type="GlyCosmos" id="P35414">
    <property type="glycosylation" value="2 sites, No reported glycans"/>
</dbReference>
<dbReference type="GlyGen" id="P35414">
    <property type="glycosylation" value="2 sites, 3 N-linked glycans (1 site)"/>
</dbReference>
<dbReference type="iPTMnet" id="P35414"/>
<dbReference type="PhosphoSitePlus" id="P35414"/>
<dbReference type="BioMuta" id="APLNR"/>
<dbReference type="DMDM" id="543823"/>
<dbReference type="jPOST" id="P35414"/>
<dbReference type="MassIVE" id="P35414"/>
<dbReference type="PaxDb" id="9606-ENSP00000475344"/>
<dbReference type="PeptideAtlas" id="P35414"/>
<dbReference type="ProteomicsDB" id="55061"/>
<dbReference type="ABCD" id="P35414">
    <property type="antibodies" value="2 sequenced antibodies"/>
</dbReference>
<dbReference type="Antibodypedia" id="14066">
    <property type="antibodies" value="562 antibodies from 36 providers"/>
</dbReference>
<dbReference type="DNASU" id="187"/>
<dbReference type="Ensembl" id="ENST00000257254.3">
    <property type="protein sequence ID" value="ENSP00000257254.3"/>
    <property type="gene ID" value="ENSG00000134817.12"/>
</dbReference>
<dbReference type="Ensembl" id="ENST00000606794.2">
    <property type="protein sequence ID" value="ENSP00000475344.1"/>
    <property type="gene ID" value="ENSG00000134817.12"/>
</dbReference>
<dbReference type="GeneID" id="187"/>
<dbReference type="KEGG" id="hsa:187"/>
<dbReference type="MANE-Select" id="ENST00000606794.2">
    <property type="protein sequence ID" value="ENSP00000475344.1"/>
    <property type="RefSeq nucleotide sequence ID" value="NM_005161.6"/>
    <property type="RefSeq protein sequence ID" value="NP_005152.1"/>
</dbReference>
<dbReference type="UCSC" id="uc001njo.4">
    <property type="organism name" value="human"/>
</dbReference>
<dbReference type="AGR" id="HGNC:339"/>
<dbReference type="CTD" id="187"/>
<dbReference type="DisGeNET" id="187"/>
<dbReference type="GeneCards" id="APLNR"/>
<dbReference type="HGNC" id="HGNC:339">
    <property type="gene designation" value="APLNR"/>
</dbReference>
<dbReference type="HPA" id="ENSG00000134817">
    <property type="expression patterns" value="Tissue enhanced (brain, lymphoid tissue, placenta)"/>
</dbReference>
<dbReference type="MalaCards" id="APLNR"/>
<dbReference type="MIM" id="600052">
    <property type="type" value="gene"/>
</dbReference>
<dbReference type="neXtProt" id="NX_P35414"/>
<dbReference type="OpenTargets" id="ENSG00000134817"/>
<dbReference type="PharmGKB" id="PA162376687"/>
<dbReference type="VEuPathDB" id="HostDB:ENSG00000134817"/>
<dbReference type="eggNOG" id="KOG3656">
    <property type="taxonomic scope" value="Eukaryota"/>
</dbReference>
<dbReference type="GeneTree" id="ENSGT01130000278303"/>
<dbReference type="HOGENOM" id="CLU_009579_8_1_1"/>
<dbReference type="InParanoid" id="P35414"/>
<dbReference type="OMA" id="YAWLGYH"/>
<dbReference type="OrthoDB" id="5974286at2759"/>
<dbReference type="PAN-GO" id="P35414">
    <property type="GO annotations" value="6 GO annotations based on evolutionary models"/>
</dbReference>
<dbReference type="PhylomeDB" id="P35414"/>
<dbReference type="TreeFam" id="TF330024"/>
<dbReference type="PathwayCommons" id="P35414"/>
<dbReference type="Reactome" id="R-HSA-375276">
    <property type="pathway name" value="Peptide ligand-binding receptors"/>
</dbReference>
<dbReference type="Reactome" id="R-HSA-418594">
    <property type="pathway name" value="G alpha (i) signalling events"/>
</dbReference>
<dbReference type="SignaLink" id="P35414"/>
<dbReference type="SIGNOR" id="P35414"/>
<dbReference type="BioGRID-ORCS" id="187">
    <property type="hits" value="13 hits in 1156 CRISPR screens"/>
</dbReference>
<dbReference type="ChiTaRS" id="APLNR">
    <property type="organism name" value="human"/>
</dbReference>
<dbReference type="EvolutionaryTrace" id="P35414"/>
<dbReference type="GeneWiki" id="Apelin_receptor"/>
<dbReference type="GenomeRNAi" id="187"/>
<dbReference type="Pharos" id="P35414">
    <property type="development level" value="Tchem"/>
</dbReference>
<dbReference type="PRO" id="PR:P35414"/>
<dbReference type="Proteomes" id="UP000005640">
    <property type="component" value="Chromosome 11"/>
</dbReference>
<dbReference type="RNAct" id="P35414">
    <property type="molecule type" value="protein"/>
</dbReference>
<dbReference type="Bgee" id="ENSG00000134817">
    <property type="expression patterns" value="Expressed in cranial nerve II and 171 other cell types or tissues"/>
</dbReference>
<dbReference type="GO" id="GO:0005886">
    <property type="term" value="C:plasma membrane"/>
    <property type="evidence" value="ECO:0000314"/>
    <property type="project" value="UniProtKB"/>
</dbReference>
<dbReference type="GO" id="GO:0060182">
    <property type="term" value="F:apelin receptor activity"/>
    <property type="evidence" value="ECO:0000314"/>
    <property type="project" value="UniProtKB"/>
</dbReference>
<dbReference type="GO" id="GO:0008528">
    <property type="term" value="F:G protein-coupled peptide receptor activity"/>
    <property type="evidence" value="ECO:0000314"/>
    <property type="project" value="UniProtKB"/>
</dbReference>
<dbReference type="GO" id="GO:0004930">
    <property type="term" value="F:G protein-coupled receptor activity"/>
    <property type="evidence" value="ECO:0000304"/>
    <property type="project" value="ProtInc"/>
</dbReference>
<dbReference type="GO" id="GO:0140897">
    <property type="term" value="F:mechanoreceptor activity"/>
    <property type="evidence" value="ECO:0000314"/>
    <property type="project" value="UniProtKB"/>
</dbReference>
<dbReference type="GO" id="GO:0038023">
    <property type="term" value="F:signaling receptor activity"/>
    <property type="evidence" value="ECO:0000304"/>
    <property type="project" value="ProtInc"/>
</dbReference>
<dbReference type="GO" id="GO:0007193">
    <property type="term" value="P:adenylate cyclase-inhibiting G protein-coupled receptor signaling pathway"/>
    <property type="evidence" value="ECO:0007669"/>
    <property type="project" value="Ensembl"/>
</dbReference>
<dbReference type="GO" id="GO:0007512">
    <property type="term" value="P:adult heart development"/>
    <property type="evidence" value="ECO:0007669"/>
    <property type="project" value="Ensembl"/>
</dbReference>
<dbReference type="GO" id="GO:0001525">
    <property type="term" value="P:angiogenesis"/>
    <property type="evidence" value="ECO:0007669"/>
    <property type="project" value="UniProtKB-KW"/>
</dbReference>
<dbReference type="GO" id="GO:0035904">
    <property type="term" value="P:aorta development"/>
    <property type="evidence" value="ECO:0000250"/>
    <property type="project" value="BHF-UCL"/>
</dbReference>
<dbReference type="GO" id="GO:0060183">
    <property type="term" value="P:apelin receptor signaling pathway"/>
    <property type="evidence" value="ECO:0000314"/>
    <property type="project" value="UniProtKB"/>
</dbReference>
<dbReference type="GO" id="GO:0003171">
    <property type="term" value="P:atrioventricular valve development"/>
    <property type="evidence" value="ECO:0000250"/>
    <property type="project" value="BHF-UCL"/>
</dbReference>
<dbReference type="GO" id="GO:0001568">
    <property type="term" value="P:blood vessel development"/>
    <property type="evidence" value="ECO:0000318"/>
    <property type="project" value="GO_Central"/>
</dbReference>
<dbReference type="GO" id="GO:0060976">
    <property type="term" value="P:coronary vasculature development"/>
    <property type="evidence" value="ECO:0000250"/>
    <property type="project" value="UniProtKB"/>
</dbReference>
<dbReference type="GO" id="GO:0003272">
    <property type="term" value="P:endocardial cushion formation"/>
    <property type="evidence" value="ECO:0000250"/>
    <property type="project" value="BHF-UCL"/>
</dbReference>
<dbReference type="GO" id="GO:0007186">
    <property type="term" value="P:G protein-coupled receptor signaling pathway"/>
    <property type="evidence" value="ECO:0000314"/>
    <property type="project" value="UniProt"/>
</dbReference>
<dbReference type="GO" id="GO:0007369">
    <property type="term" value="P:gastrulation"/>
    <property type="evidence" value="ECO:0007669"/>
    <property type="project" value="UniProtKB-KW"/>
</dbReference>
<dbReference type="GO" id="GO:0007507">
    <property type="term" value="P:heart development"/>
    <property type="evidence" value="ECO:0000250"/>
    <property type="project" value="UniProtKB"/>
</dbReference>
<dbReference type="GO" id="GO:0001947">
    <property type="term" value="P:heart looping"/>
    <property type="evidence" value="ECO:0000250"/>
    <property type="project" value="BHF-UCL"/>
</dbReference>
<dbReference type="GO" id="GO:0043951">
    <property type="term" value="P:negative regulation of cAMP-mediated signaling"/>
    <property type="evidence" value="ECO:0000315"/>
    <property type="project" value="UniProtKB"/>
</dbReference>
<dbReference type="GO" id="GO:1903243">
    <property type="term" value="P:negative regulation of cardiac muscle hypertrophy in response to stress"/>
    <property type="evidence" value="ECO:0000250"/>
    <property type="project" value="UniProt"/>
</dbReference>
<dbReference type="GO" id="GO:0010629">
    <property type="term" value="P:negative regulation of gene expression"/>
    <property type="evidence" value="ECO:0000250"/>
    <property type="project" value="BHF-UCL"/>
</dbReference>
<dbReference type="GO" id="GO:0045766">
    <property type="term" value="P:positive regulation of angiogenesis"/>
    <property type="evidence" value="ECO:0000315"/>
    <property type="project" value="UniProtKB"/>
</dbReference>
<dbReference type="GO" id="GO:1903589">
    <property type="term" value="P:positive regulation of blood vessel endothelial cell proliferation involved in sprouting angiogenesis"/>
    <property type="evidence" value="ECO:0000250"/>
    <property type="project" value="UniProtKB"/>
</dbReference>
<dbReference type="GO" id="GO:1903244">
    <property type="term" value="P:positive regulation of cardiac muscle hypertrophy in response to stress"/>
    <property type="evidence" value="ECO:0000250"/>
    <property type="project" value="UniProt"/>
</dbReference>
<dbReference type="GO" id="GO:1904022">
    <property type="term" value="P:positive regulation of G protein-coupled receptor internalization"/>
    <property type="evidence" value="ECO:0000315"/>
    <property type="project" value="UniProtKB"/>
</dbReference>
<dbReference type="GO" id="GO:0051281">
    <property type="term" value="P:positive regulation of release of sequestered calcium ion into cytosol"/>
    <property type="evidence" value="ECO:0000315"/>
    <property type="project" value="UniProtKB"/>
</dbReference>
<dbReference type="GO" id="GO:0050878">
    <property type="term" value="P:regulation of body fluid levels"/>
    <property type="evidence" value="ECO:0007669"/>
    <property type="project" value="Ensembl"/>
</dbReference>
<dbReference type="GO" id="GO:1903596">
    <property type="term" value="P:regulation of gap junction assembly"/>
    <property type="evidence" value="ECO:0000250"/>
    <property type="project" value="BHF-UCL"/>
</dbReference>
<dbReference type="GO" id="GO:0010468">
    <property type="term" value="P:regulation of gene expression"/>
    <property type="evidence" value="ECO:0000250"/>
    <property type="project" value="BHF-UCL"/>
</dbReference>
<dbReference type="GO" id="GO:0035886">
    <property type="term" value="P:vascular associated smooth muscle cell differentiation"/>
    <property type="evidence" value="ECO:0000250"/>
    <property type="project" value="BHF-UCL"/>
</dbReference>
<dbReference type="GO" id="GO:0001944">
    <property type="term" value="P:vasculature development"/>
    <property type="evidence" value="ECO:0000250"/>
    <property type="project" value="BHF-UCL"/>
</dbReference>
<dbReference type="GO" id="GO:0001570">
    <property type="term" value="P:vasculogenesis"/>
    <property type="evidence" value="ECO:0000250"/>
    <property type="project" value="UniProtKB"/>
</dbReference>
<dbReference type="GO" id="GO:0060841">
    <property type="term" value="P:venous blood vessel development"/>
    <property type="evidence" value="ECO:0000250"/>
    <property type="project" value="BHF-UCL"/>
</dbReference>
<dbReference type="GO" id="GO:0060412">
    <property type="term" value="P:ventricular septum morphogenesis"/>
    <property type="evidence" value="ECO:0000250"/>
    <property type="project" value="BHF-UCL"/>
</dbReference>
<dbReference type="CDD" id="cd15190">
    <property type="entry name" value="7tmA_Apelin_R"/>
    <property type="match status" value="1"/>
</dbReference>
<dbReference type="FunFam" id="1.20.1070.10:FF:000106">
    <property type="entry name" value="Apelin receptor a"/>
    <property type="match status" value="1"/>
</dbReference>
<dbReference type="Gene3D" id="1.20.1070.10">
    <property type="entry name" value="Rhodopsin 7-helix transmembrane proteins"/>
    <property type="match status" value="1"/>
</dbReference>
<dbReference type="InterPro" id="IPR003904">
    <property type="entry name" value="Apelin_rcpt"/>
</dbReference>
<dbReference type="InterPro" id="IPR050119">
    <property type="entry name" value="CCR1-9-like"/>
</dbReference>
<dbReference type="InterPro" id="IPR000276">
    <property type="entry name" value="GPCR_Rhodpsn"/>
</dbReference>
<dbReference type="InterPro" id="IPR017452">
    <property type="entry name" value="GPCR_Rhodpsn_7TM"/>
</dbReference>
<dbReference type="PANTHER" id="PTHR10489:SF953">
    <property type="entry name" value="APELIN RECEPTOR"/>
    <property type="match status" value="1"/>
</dbReference>
<dbReference type="PANTHER" id="PTHR10489">
    <property type="entry name" value="CELL ADHESION MOLECULE"/>
    <property type="match status" value="1"/>
</dbReference>
<dbReference type="Pfam" id="PF00001">
    <property type="entry name" value="7tm_1"/>
    <property type="match status" value="1"/>
</dbReference>
<dbReference type="PRINTS" id="PR01416">
    <property type="entry name" value="APJRECEPTOR"/>
</dbReference>
<dbReference type="PRINTS" id="PR00237">
    <property type="entry name" value="GPCRRHODOPSN"/>
</dbReference>
<dbReference type="SUPFAM" id="SSF81321">
    <property type="entry name" value="Family A G protein-coupled receptor-like"/>
    <property type="match status" value="1"/>
</dbReference>
<dbReference type="PROSITE" id="PS00237">
    <property type="entry name" value="G_PROTEIN_RECEP_F1_1"/>
    <property type="match status" value="1"/>
</dbReference>
<dbReference type="PROSITE" id="PS50262">
    <property type="entry name" value="G_PROTEIN_RECEP_F1_2"/>
    <property type="match status" value="1"/>
</dbReference>
<gene>
    <name evidence="15" type="primary">APLNR</name>
    <name type="synonym">AGTRL1</name>
    <name type="synonym">APJ</name>
</gene>
<comment type="function">
    <text evidence="1 3 7 8 9 10 11 12">G protein-coupled receptor for peptide hormones apelin (APLN) and apelin receptor early endogenous ligand (APELA/ELA), that plays a role in the regulation of normal cardiovascular function and fluid homeostasis (PubMed:11090199, PubMed:22810587, PubMed:25639753, PubMed:28137936, PubMed:35817871, PubMed:38428423). When acting as apelin receptor, activates both G(i) protein pathway that inhibits adenylate cyclase activity, and the beta-arrestin pathway that promotes internalization of the receptor (PubMed:11090199, PubMed:25639753, PubMed:28137936, PubMed:35817871, PubMed:38428423). APLNR/APJ also functions as mechanoreceptor that is activated by pathological stimuli in a G-protein-independent fashion to induce beta-arrestin signaling, hence eliciting cardiac hypertrophy (PubMed:22810587, PubMed:38428423). However, the presence of apelin ligand blunts cardiac hypertrophic induction from APLNR/APJ on response to pathological stimuli (PubMed:22810587, PubMed:38428423). Plays a key role in early development such as gastrulation, blood vessels formation and heart morphogenesis by acting as a APELA receptor (By similarity). May promote angioblast migration toward the embryonic midline, i.e. the position of the future vessel formation, during vasculogenesis (By similarity). Promotes sinus venosus (SV)-derived endothelial cells migration into the developing heart to promote coronary blood vessel development (By similarity). Also plays a role in various processes in adults such as regulation of blood vessel formation, blood pressure, heart contractility and heart failure (PubMed:25639753, PubMed:28137936).</text>
</comment>
<comment type="function">
    <text evidence="7">(Microbial infection) Alternative coreceptor with CD4 for HIV-1 infection; may be involved in the development of AIDS dementia (PubMed:11090199).</text>
</comment>
<comment type="subunit">
    <text evidence="11">Homodimer; dimerization inhibits APLNR-mediated G protein and beta-arrestin signaling pathways compared to monomeric APLNR.</text>
</comment>
<comment type="interaction">
    <interactant intactId="EBI-2875891">
        <id>P35414</id>
    </interactant>
    <interactant intactId="EBI-6623016">
        <id>P30556</id>
        <label>AGTR1</label>
    </interactant>
    <organismsDiffer>false</organismsDiffer>
    <experiments>14</experiments>
</comment>
<comment type="interaction">
    <interactant intactId="EBI-2875891">
        <id>P35414</id>
    </interactant>
    <interactant intactId="EBI-3905204">
        <id>P29033</id>
        <label>GJB2</label>
    </interactant>
    <organismsDiffer>false</organismsDiffer>
    <experiments>3</experiments>
</comment>
<comment type="interaction">
    <interactant intactId="EBI-2875891">
        <id>P35414</id>
    </interactant>
    <interactant intactId="EBI-21914411">
        <id>O43613</id>
        <label>HCRTR1</label>
    </interactant>
    <organismsDiffer>false</organismsDiffer>
    <experiments>6</experiments>
</comment>
<comment type="interaction">
    <interactant intactId="EBI-2875891">
        <id>P35414</id>
    </interactant>
    <interactant intactId="EBI-925028">
        <id>P41145</id>
        <label>OPRK1</label>
    </interactant>
    <organismsDiffer>false</organismsDiffer>
    <experiments>4</experiments>
</comment>
<comment type="subcellular location">
    <subcellularLocation>
        <location evidence="9 11 12">Cell membrane</location>
    </subcellularLocation>
    <text evidence="2 9">After exposure to apelin (APLN), internalized from the cell surface into an endosomal recycling compartment, from where it is recycled to the cell membrane (By similarity). After exposure to apelin receptor early endogenous ligand (APELA), internalized from the cell surface into an endosomal recycling compartment, from where it is recycled to the cell membrane (PubMed:25639753).</text>
</comment>
<comment type="tissue specificity">
    <text evidence="9 13">Expressed in heart, brain, kidney, stomach, spleen, thymus, lung, ovary, small intestine and colon, adipose tissues and pancreas (PubMed:25639753, PubMed:8294032). Expressed in glial cells, astrocytes and neuronal subpopulations (PubMed:8294032). Expressed in embryonic (ESCs) and induced (iPSCs) pluripotent stem cells (PubMed:25639753).</text>
</comment>
<comment type="domain">
    <text evidence="12">The hydrogen bond between Asn-46 and Asp-75 is crucial for beta-arrestin signaling induced by APLN/apelin-13.</text>
</comment>
<comment type="similarity">
    <text evidence="5">Belongs to the G-protein coupled receptor 1 family.</text>
</comment>
<comment type="online information" name="Atlas of Genetics and Cytogenetics in Oncology and Haematology">
    <link uri="https://atlasgeneticsoncology.org/gene/44364/APLNR"/>
</comment>
<keyword id="KW-0002">3D-structure</keyword>
<keyword id="KW-0037">Angiogenesis</keyword>
<keyword id="KW-1003">Cell membrane</keyword>
<keyword id="KW-0217">Developmental protein</keyword>
<keyword id="KW-1015">Disulfide bond</keyword>
<keyword id="KW-0297">G-protein coupled receptor</keyword>
<keyword id="KW-0306">Gastrulation</keyword>
<keyword id="KW-0325">Glycoprotein</keyword>
<keyword id="KW-0945">Host-virus interaction</keyword>
<keyword id="KW-0472">Membrane</keyword>
<keyword id="KW-1267">Proteomics identification</keyword>
<keyword id="KW-0675">Receptor</keyword>
<keyword id="KW-1185">Reference proteome</keyword>
<keyword id="KW-0807">Transducer</keyword>
<keyword id="KW-0812">Transmembrane</keyword>
<keyword id="KW-1133">Transmembrane helix</keyword>
<reference key="1">
    <citation type="journal article" date="1993" name="Gene">
        <title>A human gene that shows identity with the gene encoding the angiotensin receptor is located on chromosome 11.</title>
        <authorList>
            <person name="O'Dowd B.F."/>
            <person name="Heiber M."/>
            <person name="Chan A."/>
            <person name="Heng H.H.Q."/>
            <person name="Tsui L.-C."/>
            <person name="Kennedy J.L."/>
            <person name="Shi X."/>
            <person name="Petronis A."/>
            <person name="George S.R."/>
            <person name="Nguyen T."/>
        </authorList>
    </citation>
    <scope>NUCLEOTIDE SEQUENCE [GENOMIC DNA]</scope>
    <scope>TISSUE SPECIFICITY</scope>
</reference>
<reference key="2">
    <citation type="submission" date="1995-06" db="EMBL/GenBank/DDBJ databases">
        <title>Molecular cloning and tissue distribution of a human orphan receptor belonging to the G protein coupled receptors family.</title>
        <authorList>
            <person name="Eggerickx D."/>
            <person name="Schurmans S."/>
            <person name="Vassart G."/>
            <person name="Parmentier M."/>
        </authorList>
    </citation>
    <scope>NUCLEOTIDE SEQUENCE [MRNA]</scope>
</reference>
<reference key="3">
    <citation type="journal article" date="2004" name="Genome Res.">
        <title>The status, quality, and expansion of the NIH full-length cDNA project: the Mammalian Gene Collection (MGC).</title>
        <authorList>
            <consortium name="The MGC Project Team"/>
        </authorList>
    </citation>
    <scope>NUCLEOTIDE SEQUENCE [LARGE SCALE MRNA]</scope>
    <source>
        <tissue>Brain</tissue>
    </source>
</reference>
<reference key="4">
    <citation type="journal article" date="2000" name="J. Virol.">
        <title>Apelin, the natural ligand of the orphan seven-transmembrane receptor APJ, inhibits human immunodeficiency virus type 1 entry.</title>
        <authorList>
            <person name="Cayabyab M."/>
            <person name="Hinuma S."/>
            <person name="Farzan M."/>
            <person name="Choe H."/>
            <person name="Fukusumi S."/>
            <person name="Kitada C."/>
            <person name="Nishizawa N."/>
            <person name="Hosoya M."/>
            <person name="Nishimura O."/>
            <person name="Messele T."/>
            <person name="Pollakis G."/>
            <person name="Goudsmit J."/>
            <person name="Fujino M."/>
            <person name="Sodroski J."/>
        </authorList>
    </citation>
    <scope>FUNCTION</scope>
    <scope>FUNCTION (MICROBIAL INFECTION)</scope>
</reference>
<reference key="5">
    <citation type="journal article" date="2012" name="Nature">
        <title>APJ acts as a dual receptor in cardiac hypertrophy.</title>
        <authorList>
            <person name="Scimia M.C."/>
            <person name="Hurtado C."/>
            <person name="Ray S."/>
            <person name="Metzler S."/>
            <person name="Wei K."/>
            <person name="Wang J."/>
            <person name="Woods C.E."/>
            <person name="Purcell N.H."/>
            <person name="Catalucci D."/>
            <person name="Akasaka T."/>
            <person name="Bueno O.F."/>
            <person name="Vlasuk G.P."/>
            <person name="Kaliman P."/>
            <person name="Bodmer R."/>
            <person name="Smith L.H."/>
            <person name="Ashley E."/>
            <person name="Mercola M."/>
            <person name="Brown J.H."/>
            <person name="Ruiz-Lozano P."/>
        </authorList>
    </citation>
    <scope>FUNCTION</scope>
</reference>
<reference key="6">
    <citation type="journal article" date="2015" name="Sci. Rep.">
        <title>Elabela-apelin receptor signaling pathway is functional in mammalian systems.</title>
        <authorList>
            <person name="Wang Z."/>
            <person name="Yu D."/>
            <person name="Wang M."/>
            <person name="Wang Q."/>
            <person name="Kouznetsova J."/>
            <person name="Yang R."/>
            <person name="Qian K."/>
            <person name="Wu W."/>
            <person name="Shuldiner A."/>
            <person name="Sztalryd C."/>
            <person name="Zou M."/>
            <person name="Zheng W."/>
            <person name="Gong D.W."/>
        </authorList>
    </citation>
    <scope>FUNCTION</scope>
    <scope>SUBCELLULAR LOCATION</scope>
    <scope>TISSUE SPECIFICITY</scope>
</reference>
<reference key="7">
    <citation type="journal article" date="2017" name="Circulation">
        <title>Elabela/Toddler is an endogenous agonist of the apelin APJ receptor in the adult cardiovascular system, and exogenous administration of the peptide compensates for the downregulation of its expression in pulmonary arterial hypertension.</title>
        <authorList>
            <person name="Yang P."/>
            <person name="Read C."/>
            <person name="Kuc R.E."/>
            <person name="Buonincontri G."/>
            <person name="Southwood M."/>
            <person name="Torella R."/>
            <person name="Upton P.D."/>
            <person name="Crosby A."/>
            <person name="Sawiak S.J."/>
            <person name="Carpenter T.A."/>
            <person name="Glen R.C."/>
            <person name="Morrell N.W."/>
            <person name="Maguire J.J."/>
            <person name="Davenport A.P."/>
        </authorList>
    </citation>
    <scope>FUNCTION</scope>
</reference>
<reference evidence="16 17 18 19 20" key="8">
    <citation type="journal article" date="2022" name="Nat. Struct. Mol. Biol.">
        <title>Structural insight into apelin receptor-G protein stoichiometry.</title>
        <authorList>
            <person name="Yue Y."/>
            <person name="Liu L."/>
            <person name="Wu L.J."/>
            <person name="Wu Y."/>
            <person name="Wang L."/>
            <person name="Li F."/>
            <person name="Liu J."/>
            <person name="Han G.W."/>
            <person name="Chen B."/>
            <person name="Lin X."/>
            <person name="Brouillette R.L."/>
            <person name="Breault E."/>
            <person name="Longpre J.M."/>
            <person name="Shi S."/>
            <person name="Lei H."/>
            <person name="Sarret P."/>
            <person name="Stevens R.C."/>
            <person name="Hanson M.A."/>
            <person name="Xu F."/>
        </authorList>
    </citation>
    <scope>X-RAY CRYSTALLOGRAPHY (2.70 ANGSTROMS) OF 7-229 AND 243-330 IN COMPLEX WITH APELA AND G PROTEINS</scope>
    <scope>DISULFIDE BONDS</scope>
    <scope>HOMODIMER</scope>
    <scope>MUTAGENESIS OF TRP-85; TYR-88; TYR-93; PHE-97; GLY-98; THR-99; PHE-100; PHE-101; PHE-110; ARG-168; LEU-173 AND MET-183</scope>
    <scope>FUNCTION</scope>
    <scope>SUBCELLULAR LOCATION</scope>
</reference>
<reference evidence="21 22 23 24 25" key="9">
    <citation type="journal article" date="2024" name="Cell">
        <title>Structure-based design of non-hypertrophic apelin receptor modulator.</title>
        <authorList>
            <person name="Wang W.W."/>
            <person name="Ji S.Y."/>
            <person name="Zhang W."/>
            <person name="Zhang J."/>
            <person name="Cai C."/>
            <person name="Hu R."/>
            <person name="Zang S.K."/>
            <person name="Miao L."/>
            <person name="Xu H."/>
            <person name="Chen L.N."/>
            <person name="Yang Z."/>
            <person name="Guo J."/>
            <person name="Qin J."/>
            <person name="Shen D.D."/>
            <person name="Liang P."/>
            <person name="Zhang Y."/>
            <person name="Zhang Y."/>
        </authorList>
    </citation>
    <scope>STRUCTURE BY ELECTRON MICROSCOPY (2.60 ANGSTROMS) IN COMPLEX WITH APLN AND G PROTEINS</scope>
    <scope>DISULFIDE BONDS</scope>
    <scope>FUNCTION</scope>
    <scope>SUBCELLULAR LOCATION</scope>
    <scope>DOMAIN</scope>
    <scope>MUTAGENESIS OF CYS-19; TYR-35; ASN-46; ASP-75; TRP-85; ILE-109; SER-116; ARG-168; TYR-185; LYS-268; TYR-271; TYR-299 AND SER-302</scope>
</reference>
<name>APJ_HUMAN</name>
<protein>
    <recommendedName>
        <fullName>Apelin receptor</fullName>
    </recommendedName>
    <alternativeName>
        <fullName>Angiotensin receptor-like 1</fullName>
    </alternativeName>
    <alternativeName>
        <fullName>G-protein coupled receptor APJ</fullName>
    </alternativeName>
    <alternativeName>
        <fullName>G-protein coupled receptor HG11</fullName>
    </alternativeName>
</protein>
<feature type="chain" id="PRO_0000069173" description="Apelin receptor">
    <location>
        <begin position="1"/>
        <end position="380"/>
    </location>
</feature>
<feature type="topological domain" description="Extracellular" evidence="14">
    <location>
        <begin position="1"/>
        <end position="30"/>
    </location>
</feature>
<feature type="transmembrane region" description="Helical; Name=1" evidence="11 19">
    <location>
        <begin position="31"/>
        <end position="54"/>
    </location>
</feature>
<feature type="topological domain" description="Cytoplasmic" evidence="14">
    <location>
        <begin position="55"/>
        <end position="64"/>
    </location>
</feature>
<feature type="transmembrane region" description="Helical; Name=2" evidence="11 19">
    <location>
        <begin position="65"/>
        <end position="86"/>
    </location>
</feature>
<feature type="topological domain" description="Extracellular" evidence="14">
    <location>
        <begin position="87"/>
        <end position="99"/>
    </location>
</feature>
<feature type="transmembrane region" description="Helical; Name=3" evidence="11 19">
    <location>
        <begin position="100"/>
        <end position="125"/>
    </location>
</feature>
<feature type="topological domain" description="Cytoplasmic" evidence="14">
    <location>
        <begin position="126"/>
        <end position="146"/>
    </location>
</feature>
<feature type="transmembrane region" description="Helical; Name=4" evidence="11 19">
    <location>
        <begin position="147"/>
        <end position="164"/>
    </location>
</feature>
<feature type="topological domain" description="Extracellular" evidence="14">
    <location>
        <begin position="165"/>
        <end position="198"/>
    </location>
</feature>
<feature type="transmembrane region" description="Helical; Name=5" evidence="11 19">
    <location>
        <begin position="199"/>
        <end position="223"/>
    </location>
</feature>
<feature type="topological domain" description="Cytoplasmic" evidence="14">
    <location>
        <begin position="224"/>
        <end position="246"/>
    </location>
</feature>
<feature type="transmembrane region" description="Helical; Name=6" evidence="11 19">
    <location>
        <begin position="247"/>
        <end position="270"/>
    </location>
</feature>
<feature type="topological domain" description="Extracellular" evidence="14">
    <location>
        <begin position="271"/>
        <end position="289"/>
    </location>
</feature>
<feature type="transmembrane region" description="Helical; Name=7" evidence="11 19">
    <location>
        <begin position="290"/>
        <end position="312"/>
    </location>
</feature>
<feature type="topological domain" description="Cytoplasmic" evidence="14">
    <location>
        <begin position="313"/>
        <end position="380"/>
    </location>
</feature>
<feature type="region of interest" description="Disordered" evidence="6">
    <location>
        <begin position="342"/>
        <end position="380"/>
    </location>
</feature>
<feature type="compositionally biased region" description="Low complexity" evidence="6">
    <location>
        <begin position="342"/>
        <end position="351"/>
    </location>
</feature>
<feature type="compositionally biased region" description="Polar residues" evidence="6">
    <location>
        <begin position="371"/>
        <end position="380"/>
    </location>
</feature>
<feature type="site" description="Required for APELA and APLN/apelin-13 interaction and signaling" evidence="11 12">
    <location>
        <position position="85"/>
    </location>
</feature>
<feature type="site" description="Required for APELA and APLN/apelin-13 interaction and signaling" evidence="11 12">
    <location>
        <position position="168"/>
    </location>
</feature>
<feature type="glycosylation site" description="N-linked (GlcNAc...) asparagine" evidence="4">
    <location>
        <position position="15"/>
    </location>
</feature>
<feature type="glycosylation site" description="N-linked (GlcNAc...) asparagine" evidence="4">
    <location>
        <position position="175"/>
    </location>
</feature>
<feature type="disulfide bond" evidence="21 23 24 25">
    <location>
        <begin position="19"/>
        <end position="281"/>
    </location>
</feature>
<feature type="disulfide bond" evidence="16 17 18 19 20 21 22 23 24 25">
    <location>
        <begin position="102"/>
        <end position="181"/>
    </location>
</feature>
<feature type="sequence variant" id="VAR_049375" description="In dbSNP:rs7943508.">
    <original>V</original>
    <variation>I</variation>
    <location>
        <position position="300"/>
    </location>
</feature>
<feature type="mutagenesis site" description="Decreased APLN/apelin-13 potency." evidence="12">
    <original>C</original>
    <variation>A</variation>
    <location>
        <position position="19"/>
    </location>
</feature>
<feature type="mutagenesis site" description="Decreased APLN/apelin-13 potency. Decreased G(i) and beta-arresting signalings after APLN/apelin-13 induction." evidence="12">
    <original>Y</original>
    <variation>A</variation>
    <location>
        <position position="35"/>
    </location>
</feature>
<feature type="mutagenesis site" description="Loss of beta-arrestin recrutment after APLN/apelin-13 induction. Small decrease in G(i) signaling after APLN/apelin-13 induction." evidence="12">
    <original>N</original>
    <variation>A</variation>
    <location>
        <position position="46"/>
    </location>
</feature>
<feature type="mutagenesis site" description="Loss of APELA signaling. Loss of APLN/apelin-13 signaling." evidence="11 12">
    <original>W</original>
    <variation>A</variation>
    <location>
        <position position="85"/>
    </location>
</feature>
<feature type="mutagenesis site" description="Decreased APELA potency. No change in APLN/apelin-13 potency." evidence="11">
    <original>Y</original>
    <variation>A</variation>
    <location>
        <position position="88"/>
    </location>
</feature>
<feature type="mutagenesis site" description="Decreased APELA potency. No change in APLN/apelin-13 potency." evidence="11">
    <original>Y</original>
    <variation>A</variation>
    <location>
        <position position="93"/>
    </location>
</feature>
<feature type="mutagenesis site" description="Decreased protein expression level and cAMP-dependent pathway. Decreased protein expression level and cAMP-dependent pathway; when associated with A-98, A-99, A-100 and A-101." evidence="11">
    <original>F</original>
    <variation>A</variation>
    <location>
        <position position="97"/>
    </location>
</feature>
<feature type="mutagenesis site" description="Decreased protein expression level. Decreased protein expression level; when associated with A-97, A-99, A-100 and A-101." evidence="11">
    <original>G</original>
    <variation>A</variation>
    <location>
        <position position="98"/>
    </location>
</feature>
<feature type="mutagenesis site" description="No change in protein expression level. Decreased protein expression level; when associated with A-97, A-98, A-100 and A-101." evidence="11">
    <original>T</original>
    <variation>A</variation>
    <location>
        <position position="99"/>
    </location>
</feature>
<feature type="mutagenesis site" description="No change in protein expression level. Decreased protein expression level; when associated with A-97, A-98, A-99 and A-101." evidence="11">
    <original>F</original>
    <variation>A</variation>
    <location>
        <position position="100"/>
    </location>
</feature>
<feature type="mutagenesis site" description="Decreased homdimerization, no change in APELA potency, increased G protein and beta-arrestin signaling pathways. Decreased protein expression level; when associated with A-97, A-98, A-99 and A-100." evidence="11">
    <original>F</original>
    <variation>A</variation>
    <location>
        <position position="101"/>
    </location>
</feature>
<feature type="mutagenesis site" description="Strong decrease in beta-arresting signaling after APLN/apelin-13 induction. No change in G(i) signaling after APLN/apelin-13 induction." evidence="12">
    <original>I</original>
    <variation>A</variation>
    <location>
        <position position="109"/>
    </location>
</feature>
<feature type="mutagenesis site" description="No change in APELA potency. No change in APLN/apelin-13 potency. Decreased G(i) signaling and no change in beta-arresting signaling after APLN/apelin-13 induction." evidence="11">
    <original>F</original>
    <variation>A</variation>
    <location>
        <position position="110"/>
    </location>
</feature>
<feature type="mutagenesis site" description="Small decrease in G(i) signaling after APLN/apelin-13 induction. Decreased beta-arresting signaling after APLN/apelin-13 induction." evidence="12">
    <original>S</original>
    <variation>A</variation>
    <location>
        <position position="116"/>
    </location>
</feature>
<feature type="mutagenesis site" description="Loss of APELA signaling. Loss of APELA signaling." evidence="11 12">
    <original>R</original>
    <variation>A</variation>
    <location>
        <position position="168"/>
    </location>
</feature>
<feature type="mutagenesis site" description="Decreased APELA potency. No change in APLN/apelin-13 potency." evidence="11">
    <original>L</original>
    <variation>A</variation>
    <location>
        <position position="173"/>
    </location>
</feature>
<feature type="mutagenesis site" description="Decreased APELA potency. No change in APLN/apelin-13 potency." evidence="11">
    <original>M</original>
    <variation>A</variation>
    <location>
        <position position="183"/>
    </location>
</feature>
<feature type="mutagenesis site" description="Decreased APLN/apelin-13 potency." evidence="12">
    <original>Y</original>
    <variation>A</variation>
    <location>
        <position position="185"/>
    </location>
</feature>
<feature type="mutagenesis site" description="Strong decrease in beta-arresting signaling after APLN/apelin-13 induction. No change in G(i) signaling after APLN/apelin-13 induction." evidence="12">
    <original>K</original>
    <variation>A</variation>
    <location>
        <position position="268"/>
    </location>
</feature>
<feature type="mutagenesis site" description="Decreased APLN/apelin-13 potency." evidence="12">
    <original>Y</original>
    <variation>A</variation>
    <location>
        <position position="271"/>
    </location>
</feature>
<feature type="mutagenesis site" description="Decreased G(i) signalingafter APLN/apelin-13 induction. No change in beta-arresting signaling after APLN/apelin-13 induction." evidence="12">
    <original>Y</original>
    <variation>A</variation>
    <location>
        <position position="299"/>
    </location>
</feature>
<feature type="mutagenesis site" description="No change in G(i) signaling after APLN/apelin-13 induction. Decreased beta-arresting signaling after APLN/apelin-13 induction." evidence="12">
    <original>S</original>
    <variation>A</variation>
    <location>
        <position position="302"/>
    </location>
</feature>
<feature type="strand" evidence="28">
    <location>
        <begin position="9"/>
        <end position="12"/>
    </location>
</feature>
<feature type="helix" evidence="27">
    <location>
        <begin position="13"/>
        <end position="16"/>
    </location>
</feature>
<feature type="strand" evidence="26">
    <location>
        <begin position="18"/>
        <end position="20"/>
    </location>
</feature>
<feature type="turn" evidence="26">
    <location>
        <begin position="21"/>
        <end position="23"/>
    </location>
</feature>
<feature type="helix" evidence="26">
    <location>
        <begin position="24"/>
        <end position="27"/>
    </location>
</feature>
<feature type="helix" evidence="29">
    <location>
        <begin position="30"/>
        <end position="55"/>
    </location>
</feature>
<feature type="helix" evidence="29">
    <location>
        <begin position="58"/>
        <end position="60"/>
    </location>
</feature>
<feature type="helix" evidence="29">
    <location>
        <begin position="65"/>
        <end position="79"/>
    </location>
</feature>
<feature type="helix" evidence="29">
    <location>
        <begin position="82"/>
        <end position="90"/>
    </location>
</feature>
<feature type="helix" evidence="29">
    <location>
        <begin position="98"/>
        <end position="131"/>
    </location>
</feature>
<feature type="turn" evidence="30">
    <location>
        <begin position="134"/>
        <end position="136"/>
    </location>
</feature>
<feature type="helix" evidence="29">
    <location>
        <begin position="137"/>
        <end position="140"/>
    </location>
</feature>
<feature type="helix" evidence="29">
    <location>
        <begin position="142"/>
        <end position="160"/>
    </location>
</feature>
<feature type="helix" evidence="29">
    <location>
        <begin position="162"/>
        <end position="167"/>
    </location>
</feature>
<feature type="strand" evidence="29">
    <location>
        <begin position="168"/>
        <end position="171"/>
    </location>
</feature>
<feature type="turn" evidence="31">
    <location>
        <begin position="174"/>
        <end position="176"/>
    </location>
</feature>
<feature type="strand" evidence="29">
    <location>
        <begin position="180"/>
        <end position="183"/>
    </location>
</feature>
<feature type="turn" evidence="29">
    <location>
        <begin position="186"/>
        <end position="188"/>
    </location>
</feature>
<feature type="helix" evidence="31">
    <location>
        <begin position="191"/>
        <end position="193"/>
    </location>
</feature>
<feature type="helix" evidence="29">
    <location>
        <begin position="194"/>
        <end position="209"/>
    </location>
</feature>
<feature type="helix" evidence="29">
    <location>
        <begin position="211"/>
        <end position="228"/>
    </location>
</feature>
<feature type="strand" evidence="31">
    <location>
        <begin position="234"/>
        <end position="236"/>
    </location>
</feature>
<feature type="helix" evidence="29">
    <location>
        <begin position="245"/>
        <end position="275"/>
    </location>
</feature>
<feature type="turn" evidence="29">
    <location>
        <begin position="276"/>
        <end position="278"/>
    </location>
</feature>
<feature type="helix" evidence="29">
    <location>
        <begin position="281"/>
        <end position="312"/>
    </location>
</feature>
<feature type="helix" evidence="29">
    <location>
        <begin position="314"/>
        <end position="325"/>
    </location>
</feature>
<feature type="turn" evidence="29">
    <location>
        <begin position="326"/>
        <end position="329"/>
    </location>
</feature>